<dbReference type="EC" id="2.5.1.16" evidence="1"/>
<dbReference type="EMBL" id="LT708304">
    <property type="protein sequence ID" value="SIU01250.1"/>
    <property type="molecule type" value="Genomic_DNA"/>
</dbReference>
<dbReference type="RefSeq" id="NP_856278.1">
    <property type="nucleotide sequence ID" value="NC_002945.3"/>
</dbReference>
<dbReference type="RefSeq" id="WP_003899392.1">
    <property type="nucleotide sequence ID" value="NC_002945.4"/>
</dbReference>
<dbReference type="SMR" id="Q7TY95"/>
<dbReference type="KEGG" id="mbo:BQ2027_MB2632"/>
<dbReference type="PATRIC" id="fig|233413.5.peg.2893"/>
<dbReference type="UniPathway" id="UPA00248">
    <property type="reaction ID" value="UER00314"/>
</dbReference>
<dbReference type="Proteomes" id="UP000001419">
    <property type="component" value="Chromosome"/>
</dbReference>
<dbReference type="GO" id="GO:0005886">
    <property type="term" value="C:plasma membrane"/>
    <property type="evidence" value="ECO:0007669"/>
    <property type="project" value="UniProtKB-SubCell"/>
</dbReference>
<dbReference type="GO" id="GO:0004766">
    <property type="term" value="F:spermidine synthase activity"/>
    <property type="evidence" value="ECO:0007669"/>
    <property type="project" value="UniProtKB-UniRule"/>
</dbReference>
<dbReference type="GO" id="GO:0010487">
    <property type="term" value="F:thermospermine synthase activity"/>
    <property type="evidence" value="ECO:0007669"/>
    <property type="project" value="UniProtKB-ARBA"/>
</dbReference>
<dbReference type="GO" id="GO:0008295">
    <property type="term" value="P:spermidine biosynthetic process"/>
    <property type="evidence" value="ECO:0007669"/>
    <property type="project" value="UniProtKB-UniRule"/>
</dbReference>
<dbReference type="CDD" id="cd02440">
    <property type="entry name" value="AdoMet_MTases"/>
    <property type="match status" value="1"/>
</dbReference>
<dbReference type="FunFam" id="3.40.50.150:FF:000088">
    <property type="entry name" value="Polyamine aminopropyltransferase"/>
    <property type="match status" value="1"/>
</dbReference>
<dbReference type="Gene3D" id="3.40.50.150">
    <property type="entry name" value="Vaccinia Virus protein VP39"/>
    <property type="match status" value="1"/>
</dbReference>
<dbReference type="HAMAP" id="MF_00198">
    <property type="entry name" value="Spermidine_synth"/>
    <property type="match status" value="1"/>
</dbReference>
<dbReference type="InterPro" id="IPR030374">
    <property type="entry name" value="PABS"/>
</dbReference>
<dbReference type="InterPro" id="IPR030373">
    <property type="entry name" value="PABS_CS"/>
</dbReference>
<dbReference type="InterPro" id="IPR029063">
    <property type="entry name" value="SAM-dependent_MTases_sf"/>
</dbReference>
<dbReference type="InterPro" id="IPR001045">
    <property type="entry name" value="Spermi_synthase"/>
</dbReference>
<dbReference type="NCBIfam" id="NF037959">
    <property type="entry name" value="MFS_SpdSyn"/>
    <property type="match status" value="1"/>
</dbReference>
<dbReference type="NCBIfam" id="NF002956">
    <property type="entry name" value="PRK03612.1"/>
    <property type="match status" value="1"/>
</dbReference>
<dbReference type="PANTHER" id="PTHR43317">
    <property type="entry name" value="THERMOSPERMINE SYNTHASE ACAULIS5"/>
    <property type="match status" value="1"/>
</dbReference>
<dbReference type="PANTHER" id="PTHR43317:SF1">
    <property type="entry name" value="THERMOSPERMINE SYNTHASE ACAULIS5"/>
    <property type="match status" value="1"/>
</dbReference>
<dbReference type="Pfam" id="PF01564">
    <property type="entry name" value="Spermine_synth"/>
    <property type="match status" value="1"/>
</dbReference>
<dbReference type="SUPFAM" id="SSF53335">
    <property type="entry name" value="S-adenosyl-L-methionine-dependent methyltransferases"/>
    <property type="match status" value="1"/>
</dbReference>
<dbReference type="PROSITE" id="PS01330">
    <property type="entry name" value="PABS_1"/>
    <property type="match status" value="1"/>
</dbReference>
<dbReference type="PROSITE" id="PS51006">
    <property type="entry name" value="PABS_2"/>
    <property type="match status" value="1"/>
</dbReference>
<organism>
    <name type="scientific">Mycobacterium bovis (strain ATCC BAA-935 / AF2122/97)</name>
    <dbReference type="NCBI Taxonomy" id="233413"/>
    <lineage>
        <taxon>Bacteria</taxon>
        <taxon>Bacillati</taxon>
        <taxon>Actinomycetota</taxon>
        <taxon>Actinomycetes</taxon>
        <taxon>Mycobacteriales</taxon>
        <taxon>Mycobacteriaceae</taxon>
        <taxon>Mycobacterium</taxon>
        <taxon>Mycobacterium tuberculosis complex</taxon>
    </lineage>
</organism>
<keyword id="KW-1003">Cell membrane</keyword>
<keyword id="KW-0472">Membrane</keyword>
<keyword id="KW-0620">Polyamine biosynthesis</keyword>
<keyword id="KW-1185">Reference proteome</keyword>
<keyword id="KW-0745">Spermidine biosynthesis</keyword>
<keyword id="KW-0808">Transferase</keyword>
<keyword id="KW-0812">Transmembrane</keyword>
<keyword id="KW-1133">Transmembrane helix</keyword>
<accession>Q7TY95</accession>
<accession>A0A1R3Y1P3</accession>
<accession>X2BLT1</accession>
<comment type="function">
    <text evidence="1">Catalyzes the irreversible transfer of a propylamine group from the amino donor S-adenosylmethioninamine (decarboxy-AdoMet) to putrescine (1,4-diaminobutane) to yield spermidine.</text>
</comment>
<comment type="catalytic activity">
    <reaction evidence="1">
        <text>S-adenosyl 3-(methylsulfanyl)propylamine + putrescine = S-methyl-5'-thioadenosine + spermidine + H(+)</text>
        <dbReference type="Rhea" id="RHEA:12721"/>
        <dbReference type="ChEBI" id="CHEBI:15378"/>
        <dbReference type="ChEBI" id="CHEBI:17509"/>
        <dbReference type="ChEBI" id="CHEBI:57443"/>
        <dbReference type="ChEBI" id="CHEBI:57834"/>
        <dbReference type="ChEBI" id="CHEBI:326268"/>
        <dbReference type="EC" id="2.5.1.16"/>
    </reaction>
</comment>
<comment type="pathway">
    <text evidence="1">Amine and polyamine biosynthesis; spermidine biosynthesis; spermidine from putrescine: step 1/1.</text>
</comment>
<comment type="subunit">
    <text evidence="1">Homodimer or homotetramer.</text>
</comment>
<comment type="subcellular location">
    <subcellularLocation>
        <location evidence="1">Cell membrane</location>
        <topology evidence="1">Multi-pass membrane protein</topology>
    </subcellularLocation>
</comment>
<comment type="similarity">
    <text evidence="1">Belongs to the spermidine/spermine synthase family.</text>
</comment>
<feature type="chain" id="PRO_0000156487" description="Polyamine aminopropyltransferase">
    <location>
        <begin position="1"/>
        <end position="523"/>
    </location>
</feature>
<feature type="transmembrane region" description="Helical" evidence="1">
    <location>
        <begin position="20"/>
        <end position="40"/>
    </location>
</feature>
<feature type="transmembrane region" description="Helical" evidence="1">
    <location>
        <begin position="51"/>
        <end position="71"/>
    </location>
</feature>
<feature type="transmembrane region" description="Helical" evidence="1">
    <location>
        <begin position="88"/>
        <end position="108"/>
    </location>
</feature>
<feature type="transmembrane region" description="Helical" evidence="1">
    <location>
        <begin position="116"/>
        <end position="136"/>
    </location>
</feature>
<feature type="transmembrane region" description="Helical" evidence="1">
    <location>
        <begin position="164"/>
        <end position="184"/>
    </location>
</feature>
<feature type="transmembrane region" description="Helical" evidence="1">
    <location>
        <begin position="186"/>
        <end position="206"/>
    </location>
</feature>
<feature type="transmembrane region" description="Helical" evidence="1">
    <location>
        <begin position="215"/>
        <end position="235"/>
    </location>
</feature>
<feature type="domain" description="PABS" evidence="1">
    <location>
        <begin position="231"/>
        <end position="465"/>
    </location>
</feature>
<feature type="region of interest" description="Spermidine synthase">
    <location>
        <begin position="203"/>
        <end position="478"/>
    </location>
</feature>
<feature type="active site" description="Proton acceptor" evidence="1">
    <location>
        <position position="386"/>
    </location>
</feature>
<feature type="binding site" evidence="1">
    <location>
        <position position="261"/>
    </location>
    <ligand>
        <name>S-methyl-5'-thioadenosine</name>
        <dbReference type="ChEBI" id="CHEBI:17509"/>
    </ligand>
</feature>
<feature type="binding site" evidence="1">
    <location>
        <position position="313"/>
    </location>
    <ligand>
        <name>spermidine</name>
        <dbReference type="ChEBI" id="CHEBI:57834"/>
    </ligand>
</feature>
<feature type="binding site" evidence="1">
    <location>
        <position position="333"/>
    </location>
    <ligand>
        <name>S-methyl-5'-thioadenosine</name>
        <dbReference type="ChEBI" id="CHEBI:17509"/>
    </ligand>
</feature>
<feature type="binding site" evidence="1">
    <location>
        <begin position="365"/>
        <end position="366"/>
    </location>
    <ligand>
        <name>S-methyl-5'-thioadenosine</name>
        <dbReference type="ChEBI" id="CHEBI:17509"/>
    </ligand>
</feature>
<name>SPEE_MYCBO</name>
<protein>
    <recommendedName>
        <fullName evidence="1">Polyamine aminopropyltransferase</fullName>
    </recommendedName>
    <alternativeName>
        <fullName evidence="1">Putrescine aminopropyltransferase</fullName>
        <shortName evidence="1">PAPT</shortName>
    </alternativeName>
    <alternativeName>
        <fullName evidence="1">Spermidine synthase</fullName>
        <shortName evidence="1">SPDS</shortName>
        <shortName evidence="1">SPDSY</shortName>
        <ecNumber evidence="1">2.5.1.16</ecNumber>
    </alternativeName>
</protein>
<sequence>MTSTRQAGEATEASVRWRAVLLAAVAACAACGLVYELALLTLAASLNGGGIVATSLIVAGYIAALGAGALLIKPLLAHAAIAFIAVEAVLGIIGGLSAAALYAAFAFLDELDGSTLVLAVGTALIGGLVGAEVPLLMTLLQRGRVAGAADAGRTLANLNAADYLGALVGGLAWPFLLLPQLGMIRGAAVTGIVNLAAAGVVSIFLLRHVVSGRQLVTALCALAAALGLIATLLVHSHDIETTGRQQLYADPIIAYRHSAYQEIVVTRRGDDLRLYLDGGLQFCTRDEYRYTESLVYPAVSDGARSVLVLGGGDGLAARELLRQPGIEQIVQVELDPAVIELARTTLRDVNAGSLDNPRVHVVIDDAMSWLRGAAVPPAGFDAVIVDLRDPDTPVLGRLYSTEFYALAARALAPGGLMVVQAGSPYSTPTAFWRIISTIRSAGYAVTPYHVHVPTFGDWGFALARLTDIAPTPAVPSTAPALRFLDQQVLEAATVFSGDIRPRTLDPSTLDNPHIVEDMRHGWD</sequence>
<evidence type="ECO:0000255" key="1">
    <source>
        <dbReference type="HAMAP-Rule" id="MF_00198"/>
    </source>
</evidence>
<proteinExistence type="inferred from homology"/>
<gene>
    <name evidence="1" type="primary">speE</name>
    <name type="ordered locus">BQ2027_MB2632</name>
</gene>
<reference key="1">
    <citation type="journal article" date="2003" name="Proc. Natl. Acad. Sci. U.S.A.">
        <title>The complete genome sequence of Mycobacterium bovis.</title>
        <authorList>
            <person name="Garnier T."/>
            <person name="Eiglmeier K."/>
            <person name="Camus J.-C."/>
            <person name="Medina N."/>
            <person name="Mansoor H."/>
            <person name="Pryor M."/>
            <person name="Duthoy S."/>
            <person name="Grondin S."/>
            <person name="Lacroix C."/>
            <person name="Monsempe C."/>
            <person name="Simon S."/>
            <person name="Harris B."/>
            <person name="Atkin R."/>
            <person name="Doggett J."/>
            <person name="Mayes R."/>
            <person name="Keating L."/>
            <person name="Wheeler P.R."/>
            <person name="Parkhill J."/>
            <person name="Barrell B.G."/>
            <person name="Cole S.T."/>
            <person name="Gordon S.V."/>
            <person name="Hewinson R.G."/>
        </authorList>
    </citation>
    <scope>NUCLEOTIDE SEQUENCE [LARGE SCALE GENOMIC DNA]</scope>
    <source>
        <strain>ATCC BAA-935 / AF2122/97</strain>
    </source>
</reference>
<reference key="2">
    <citation type="journal article" date="2017" name="Genome Announc.">
        <title>Updated reference genome sequence and annotation of Mycobacterium bovis AF2122/97.</title>
        <authorList>
            <person name="Malone K.M."/>
            <person name="Farrell D."/>
            <person name="Stuber T.P."/>
            <person name="Schubert O.T."/>
            <person name="Aebersold R."/>
            <person name="Robbe-Austerman S."/>
            <person name="Gordon S.V."/>
        </authorList>
    </citation>
    <scope>NUCLEOTIDE SEQUENCE [LARGE SCALE GENOMIC DNA]</scope>
    <scope>GENOME REANNOTATION</scope>
    <source>
        <strain>ATCC BAA-935 / AF2122/97</strain>
    </source>
</reference>